<dbReference type="EC" id="3.5.3.12" evidence="1"/>
<dbReference type="EMBL" id="CP000446">
    <property type="protein sequence ID" value="ABI40355.1"/>
    <property type="molecule type" value="Genomic_DNA"/>
</dbReference>
<dbReference type="RefSeq" id="WP_011624023.1">
    <property type="nucleotide sequence ID" value="NC_008321.1"/>
</dbReference>
<dbReference type="SMR" id="Q0HF12"/>
<dbReference type="KEGG" id="she:Shewmr4_3288"/>
<dbReference type="HOGENOM" id="CLU_037682_1_0_6"/>
<dbReference type="GO" id="GO:0047632">
    <property type="term" value="F:agmatine deiminase activity"/>
    <property type="evidence" value="ECO:0007669"/>
    <property type="project" value="UniProtKB-UniRule"/>
</dbReference>
<dbReference type="GO" id="GO:0004668">
    <property type="term" value="F:protein-arginine deiminase activity"/>
    <property type="evidence" value="ECO:0007669"/>
    <property type="project" value="InterPro"/>
</dbReference>
<dbReference type="GO" id="GO:0009446">
    <property type="term" value="P:putrescine biosynthetic process"/>
    <property type="evidence" value="ECO:0007669"/>
    <property type="project" value="InterPro"/>
</dbReference>
<dbReference type="Gene3D" id="3.75.10.10">
    <property type="entry name" value="L-arginine/glycine Amidinotransferase, Chain A"/>
    <property type="match status" value="1"/>
</dbReference>
<dbReference type="HAMAP" id="MF_01841">
    <property type="entry name" value="Agmatine_deimin"/>
    <property type="match status" value="1"/>
</dbReference>
<dbReference type="InterPro" id="IPR017754">
    <property type="entry name" value="Agmatine_deiminase"/>
</dbReference>
<dbReference type="InterPro" id="IPR007466">
    <property type="entry name" value="Peptidyl-Arg-deiminase_porph"/>
</dbReference>
<dbReference type="NCBIfam" id="TIGR03380">
    <property type="entry name" value="agmatine_aguA"/>
    <property type="match status" value="1"/>
</dbReference>
<dbReference type="NCBIfam" id="NF010070">
    <property type="entry name" value="PRK13551.1"/>
    <property type="match status" value="1"/>
</dbReference>
<dbReference type="PANTHER" id="PTHR31377">
    <property type="entry name" value="AGMATINE DEIMINASE-RELATED"/>
    <property type="match status" value="1"/>
</dbReference>
<dbReference type="PANTHER" id="PTHR31377:SF0">
    <property type="entry name" value="AGMATINE DEIMINASE-RELATED"/>
    <property type="match status" value="1"/>
</dbReference>
<dbReference type="Pfam" id="PF04371">
    <property type="entry name" value="PAD_porph"/>
    <property type="match status" value="1"/>
</dbReference>
<dbReference type="SUPFAM" id="SSF55909">
    <property type="entry name" value="Pentein"/>
    <property type="match status" value="1"/>
</dbReference>
<feature type="chain" id="PRO_1000070572" description="Putative agmatine deiminase">
    <location>
        <begin position="1"/>
        <end position="370"/>
    </location>
</feature>
<feature type="active site" description="Amidino-cysteine intermediate" evidence="1">
    <location>
        <position position="361"/>
    </location>
</feature>
<organism>
    <name type="scientific">Shewanella sp. (strain MR-4)</name>
    <dbReference type="NCBI Taxonomy" id="60480"/>
    <lineage>
        <taxon>Bacteria</taxon>
        <taxon>Pseudomonadati</taxon>
        <taxon>Pseudomonadota</taxon>
        <taxon>Gammaproteobacteria</taxon>
        <taxon>Alteromonadales</taxon>
        <taxon>Shewanellaceae</taxon>
        <taxon>Shewanella</taxon>
    </lineage>
</organism>
<sequence length="370" mass="40706">MTNANVDATQLTTKPSQDGFYMPAEWAAQQAVWMIWPYRPDNWRSAGAYAQATFAKVADAIGGATPVYMGVPQAFLAEAQKVMPSHVTLVEIDSNDCWARDTGPTVVVNAEGECRGVDWGFNAWGGHNGGLYFPWDKDEQVAAQMLKQHGFARYSAPLILEGGSIHVDGEGTCMTTAECLLNANRNPDLTKEQIEALLRDYLNVKQFIWLEEGVYMDETDGHIDNMCCFARPGEVILHWTDDETDPQYPRSKAALDVLQNTVDAQGRKLKIHLLPQPGPLYCTEEESKGVTEGTGVPRTAGERLAGSYVNFLITNDRIVFPLLDPATDDIAAQKLQDIFPEHKIVGVPAREILLGGGNIHCITQQIPSGK</sequence>
<accession>Q0HF12</accession>
<gene>
    <name evidence="1" type="primary">aguA</name>
    <name type="ordered locus">Shewmr4_3288</name>
</gene>
<evidence type="ECO:0000255" key="1">
    <source>
        <dbReference type="HAMAP-Rule" id="MF_01841"/>
    </source>
</evidence>
<keyword id="KW-0378">Hydrolase</keyword>
<protein>
    <recommendedName>
        <fullName evidence="1">Putative agmatine deiminase</fullName>
        <ecNumber evidence="1">3.5.3.12</ecNumber>
    </recommendedName>
    <alternativeName>
        <fullName evidence="1">Agmatine iminohydrolase</fullName>
    </alternativeName>
</protein>
<name>AGUA_SHESM</name>
<comment type="catalytic activity">
    <reaction evidence="1">
        <text>agmatine + H2O = N-carbamoylputrescine + NH4(+)</text>
        <dbReference type="Rhea" id="RHEA:18037"/>
        <dbReference type="ChEBI" id="CHEBI:15377"/>
        <dbReference type="ChEBI" id="CHEBI:28938"/>
        <dbReference type="ChEBI" id="CHEBI:58145"/>
        <dbReference type="ChEBI" id="CHEBI:58318"/>
        <dbReference type="EC" id="3.5.3.12"/>
    </reaction>
</comment>
<comment type="similarity">
    <text evidence="1">Belongs to the agmatine deiminase family.</text>
</comment>
<proteinExistence type="inferred from homology"/>
<reference key="1">
    <citation type="submission" date="2006-08" db="EMBL/GenBank/DDBJ databases">
        <title>Complete sequence of Shewanella sp. MR-4.</title>
        <authorList>
            <consortium name="US DOE Joint Genome Institute"/>
            <person name="Copeland A."/>
            <person name="Lucas S."/>
            <person name="Lapidus A."/>
            <person name="Barry K."/>
            <person name="Detter J.C."/>
            <person name="Glavina del Rio T."/>
            <person name="Hammon N."/>
            <person name="Israni S."/>
            <person name="Dalin E."/>
            <person name="Tice H."/>
            <person name="Pitluck S."/>
            <person name="Kiss H."/>
            <person name="Brettin T."/>
            <person name="Bruce D."/>
            <person name="Han C."/>
            <person name="Tapia R."/>
            <person name="Gilna P."/>
            <person name="Schmutz J."/>
            <person name="Larimer F."/>
            <person name="Land M."/>
            <person name="Hauser L."/>
            <person name="Kyrpides N."/>
            <person name="Mikhailova N."/>
            <person name="Nealson K."/>
            <person name="Konstantinidis K."/>
            <person name="Klappenbach J."/>
            <person name="Tiedje J."/>
            <person name="Richardson P."/>
        </authorList>
    </citation>
    <scope>NUCLEOTIDE SEQUENCE [LARGE SCALE GENOMIC DNA]</scope>
    <source>
        <strain>MR-4</strain>
    </source>
</reference>